<protein>
    <recommendedName>
        <fullName evidence="1">UPF0246 protein YaaA</fullName>
    </recommendedName>
</protein>
<gene>
    <name evidence="1" type="primary">yaaA</name>
    <name type="ordered locus">E2348C_0006</name>
</gene>
<keyword id="KW-1185">Reference proteome</keyword>
<proteinExistence type="inferred from homology"/>
<dbReference type="EMBL" id="FM180568">
    <property type="protein sequence ID" value="CAS07554.1"/>
    <property type="molecule type" value="Genomic_DNA"/>
</dbReference>
<dbReference type="RefSeq" id="WP_000906185.1">
    <property type="nucleotide sequence ID" value="NC_011601.1"/>
</dbReference>
<dbReference type="SMR" id="B7UI51"/>
<dbReference type="KEGG" id="ecg:E2348C_0006"/>
<dbReference type="HOGENOM" id="CLU_061989_0_0_6"/>
<dbReference type="Proteomes" id="UP000008205">
    <property type="component" value="Chromosome"/>
</dbReference>
<dbReference type="GO" id="GO:0005829">
    <property type="term" value="C:cytosol"/>
    <property type="evidence" value="ECO:0007669"/>
    <property type="project" value="TreeGrafter"/>
</dbReference>
<dbReference type="GO" id="GO:0033194">
    <property type="term" value="P:response to hydroperoxide"/>
    <property type="evidence" value="ECO:0007669"/>
    <property type="project" value="TreeGrafter"/>
</dbReference>
<dbReference type="HAMAP" id="MF_00652">
    <property type="entry name" value="UPF0246"/>
    <property type="match status" value="1"/>
</dbReference>
<dbReference type="InterPro" id="IPR005583">
    <property type="entry name" value="YaaA"/>
</dbReference>
<dbReference type="NCBIfam" id="NF002541">
    <property type="entry name" value="PRK02101.1-1"/>
    <property type="match status" value="1"/>
</dbReference>
<dbReference type="NCBIfam" id="NF002542">
    <property type="entry name" value="PRK02101.1-3"/>
    <property type="match status" value="1"/>
</dbReference>
<dbReference type="PANTHER" id="PTHR30283:SF4">
    <property type="entry name" value="PEROXIDE STRESS RESISTANCE PROTEIN YAAA"/>
    <property type="match status" value="1"/>
</dbReference>
<dbReference type="PANTHER" id="PTHR30283">
    <property type="entry name" value="PEROXIDE STRESS RESPONSE PROTEIN YAAA"/>
    <property type="match status" value="1"/>
</dbReference>
<dbReference type="Pfam" id="PF03883">
    <property type="entry name" value="H2O2_YaaD"/>
    <property type="match status" value="1"/>
</dbReference>
<comment type="similarity">
    <text evidence="1">Belongs to the UPF0246 family.</text>
</comment>
<accession>B7UI51</accession>
<name>YAAA_ECO27</name>
<reference key="1">
    <citation type="journal article" date="2009" name="J. Bacteriol.">
        <title>Complete genome sequence and comparative genome analysis of enteropathogenic Escherichia coli O127:H6 strain E2348/69.</title>
        <authorList>
            <person name="Iguchi A."/>
            <person name="Thomson N.R."/>
            <person name="Ogura Y."/>
            <person name="Saunders D."/>
            <person name="Ooka T."/>
            <person name="Henderson I.R."/>
            <person name="Harris D."/>
            <person name="Asadulghani M."/>
            <person name="Kurokawa K."/>
            <person name="Dean P."/>
            <person name="Kenny B."/>
            <person name="Quail M.A."/>
            <person name="Thurston S."/>
            <person name="Dougan G."/>
            <person name="Hayashi T."/>
            <person name="Parkhill J."/>
            <person name="Frankel G."/>
        </authorList>
    </citation>
    <scope>NUCLEOTIDE SEQUENCE [LARGE SCALE GENOMIC DNA]</scope>
    <source>
        <strain>E2348/69 / EPEC</strain>
    </source>
</reference>
<evidence type="ECO:0000255" key="1">
    <source>
        <dbReference type="HAMAP-Rule" id="MF_00652"/>
    </source>
</evidence>
<sequence length="258" mass="29570">MLILISPAKTLDYQSPLTTTRYTLPELLDNAQQLIHEARKLTPPQISSLMRISDKLAGINAARFHDWQPDFTPENARQAILAFKGDVYTGLQAETFSEDDFDFAQQHLRMLSGLYGVLRPLDLMQPYRLEMGIRLENARGKDLYQFWGDIITNKLNEALAAQGDNVVINLASDEYFKSVKPKKLNAEIIKPVFLDEKNGKFKIISFYAKKARGLMSRFIIENRLTKPEQLTGFNSEGYFFDEASSSNGELVFKRYEQR</sequence>
<organism>
    <name type="scientific">Escherichia coli O127:H6 (strain E2348/69 / EPEC)</name>
    <dbReference type="NCBI Taxonomy" id="574521"/>
    <lineage>
        <taxon>Bacteria</taxon>
        <taxon>Pseudomonadati</taxon>
        <taxon>Pseudomonadota</taxon>
        <taxon>Gammaproteobacteria</taxon>
        <taxon>Enterobacterales</taxon>
        <taxon>Enterobacteriaceae</taxon>
        <taxon>Escherichia</taxon>
    </lineage>
</organism>
<feature type="chain" id="PRO_1000200419" description="UPF0246 protein YaaA">
    <location>
        <begin position="1"/>
        <end position="258"/>
    </location>
</feature>